<protein>
    <recommendedName>
        <fullName evidence="1">tRNA uridine 5-carboxymethylaminomethyl modification enzyme MnmG</fullName>
    </recommendedName>
    <alternativeName>
        <fullName evidence="1">Glucose-inhibited division protein A</fullName>
    </alternativeName>
</protein>
<dbReference type="EMBL" id="CP000390">
    <property type="protein sequence ID" value="ABG64842.1"/>
    <property type="molecule type" value="Genomic_DNA"/>
</dbReference>
<dbReference type="SMR" id="Q11CN3"/>
<dbReference type="STRING" id="266779.Meso_3471"/>
<dbReference type="KEGG" id="mes:Meso_3471"/>
<dbReference type="eggNOG" id="COG0445">
    <property type="taxonomic scope" value="Bacteria"/>
</dbReference>
<dbReference type="HOGENOM" id="CLU_007831_2_2_5"/>
<dbReference type="OrthoDB" id="9815560at2"/>
<dbReference type="GO" id="GO:0005829">
    <property type="term" value="C:cytosol"/>
    <property type="evidence" value="ECO:0007669"/>
    <property type="project" value="TreeGrafter"/>
</dbReference>
<dbReference type="GO" id="GO:0050660">
    <property type="term" value="F:flavin adenine dinucleotide binding"/>
    <property type="evidence" value="ECO:0007669"/>
    <property type="project" value="UniProtKB-UniRule"/>
</dbReference>
<dbReference type="GO" id="GO:0030488">
    <property type="term" value="P:tRNA methylation"/>
    <property type="evidence" value="ECO:0007669"/>
    <property type="project" value="TreeGrafter"/>
</dbReference>
<dbReference type="GO" id="GO:0002098">
    <property type="term" value="P:tRNA wobble uridine modification"/>
    <property type="evidence" value="ECO:0007669"/>
    <property type="project" value="InterPro"/>
</dbReference>
<dbReference type="FunFam" id="3.50.50.60:FF:000082">
    <property type="entry name" value="protein MTO1 homolog, mitochondrial isoform X1"/>
    <property type="match status" value="1"/>
</dbReference>
<dbReference type="FunFam" id="1.10.150.570:FF:000001">
    <property type="entry name" value="tRNA uridine 5-carboxymethylaminomethyl modification enzyme MnmG"/>
    <property type="match status" value="1"/>
</dbReference>
<dbReference type="FunFam" id="3.50.50.60:FF:000002">
    <property type="entry name" value="tRNA uridine 5-carboxymethylaminomethyl modification enzyme MnmG"/>
    <property type="match status" value="1"/>
</dbReference>
<dbReference type="Gene3D" id="3.50.50.60">
    <property type="entry name" value="FAD/NAD(P)-binding domain"/>
    <property type="match status" value="2"/>
</dbReference>
<dbReference type="Gene3D" id="1.10.150.570">
    <property type="entry name" value="GidA associated domain, C-terminal subdomain"/>
    <property type="match status" value="1"/>
</dbReference>
<dbReference type="HAMAP" id="MF_00129">
    <property type="entry name" value="MnmG_GidA"/>
    <property type="match status" value="1"/>
</dbReference>
<dbReference type="InterPro" id="IPR036188">
    <property type="entry name" value="FAD/NAD-bd_sf"/>
</dbReference>
<dbReference type="InterPro" id="IPR049312">
    <property type="entry name" value="GIDA_C_N"/>
</dbReference>
<dbReference type="InterPro" id="IPR004416">
    <property type="entry name" value="MnmG"/>
</dbReference>
<dbReference type="InterPro" id="IPR002218">
    <property type="entry name" value="MnmG-rel"/>
</dbReference>
<dbReference type="InterPro" id="IPR020595">
    <property type="entry name" value="MnmG-rel_CS"/>
</dbReference>
<dbReference type="InterPro" id="IPR026904">
    <property type="entry name" value="MnmG_C"/>
</dbReference>
<dbReference type="InterPro" id="IPR047001">
    <property type="entry name" value="MnmG_C_subdom"/>
</dbReference>
<dbReference type="InterPro" id="IPR044920">
    <property type="entry name" value="MnmG_C_subdom_sf"/>
</dbReference>
<dbReference type="InterPro" id="IPR040131">
    <property type="entry name" value="MnmG_N"/>
</dbReference>
<dbReference type="NCBIfam" id="TIGR00136">
    <property type="entry name" value="mnmG_gidA"/>
    <property type="match status" value="1"/>
</dbReference>
<dbReference type="PANTHER" id="PTHR11806">
    <property type="entry name" value="GLUCOSE INHIBITED DIVISION PROTEIN A"/>
    <property type="match status" value="1"/>
</dbReference>
<dbReference type="PANTHER" id="PTHR11806:SF0">
    <property type="entry name" value="PROTEIN MTO1 HOMOLOG, MITOCHONDRIAL"/>
    <property type="match status" value="1"/>
</dbReference>
<dbReference type="Pfam" id="PF01134">
    <property type="entry name" value="GIDA"/>
    <property type="match status" value="1"/>
</dbReference>
<dbReference type="Pfam" id="PF21680">
    <property type="entry name" value="GIDA_C_1st"/>
    <property type="match status" value="1"/>
</dbReference>
<dbReference type="Pfam" id="PF13932">
    <property type="entry name" value="SAM_GIDA_C"/>
    <property type="match status" value="1"/>
</dbReference>
<dbReference type="SMART" id="SM01228">
    <property type="entry name" value="GIDA_assoc_3"/>
    <property type="match status" value="1"/>
</dbReference>
<dbReference type="SUPFAM" id="SSF51905">
    <property type="entry name" value="FAD/NAD(P)-binding domain"/>
    <property type="match status" value="1"/>
</dbReference>
<dbReference type="PROSITE" id="PS01280">
    <property type="entry name" value="GIDA_1"/>
    <property type="match status" value="1"/>
</dbReference>
<dbReference type="PROSITE" id="PS01281">
    <property type="entry name" value="GIDA_2"/>
    <property type="match status" value="1"/>
</dbReference>
<reference key="1">
    <citation type="submission" date="2006-06" db="EMBL/GenBank/DDBJ databases">
        <title>Complete sequence of chromosome of Mesorhizobium sp. BNC1.</title>
        <authorList>
            <consortium name="US DOE Joint Genome Institute"/>
            <person name="Copeland A."/>
            <person name="Lucas S."/>
            <person name="Lapidus A."/>
            <person name="Barry K."/>
            <person name="Detter J.C."/>
            <person name="Glavina del Rio T."/>
            <person name="Hammon N."/>
            <person name="Israni S."/>
            <person name="Dalin E."/>
            <person name="Tice H."/>
            <person name="Pitluck S."/>
            <person name="Chertkov O."/>
            <person name="Brettin T."/>
            <person name="Bruce D."/>
            <person name="Han C."/>
            <person name="Tapia R."/>
            <person name="Gilna P."/>
            <person name="Schmutz J."/>
            <person name="Larimer F."/>
            <person name="Land M."/>
            <person name="Hauser L."/>
            <person name="Kyrpides N."/>
            <person name="Mikhailova N."/>
            <person name="Richardson P."/>
        </authorList>
    </citation>
    <scope>NUCLEOTIDE SEQUENCE [LARGE SCALE GENOMIC DNA]</scope>
    <source>
        <strain>BNC1</strain>
    </source>
</reference>
<comment type="function">
    <text evidence="1">NAD-binding protein involved in the addition of a carboxymethylaminomethyl (cmnm) group at the wobble position (U34) of certain tRNAs, forming tRNA-cmnm(5)s(2)U34.</text>
</comment>
<comment type="cofactor">
    <cofactor evidence="1">
        <name>FAD</name>
        <dbReference type="ChEBI" id="CHEBI:57692"/>
    </cofactor>
</comment>
<comment type="subunit">
    <text evidence="1">Homodimer. Heterotetramer of two MnmE and two MnmG subunits.</text>
</comment>
<comment type="subcellular location">
    <subcellularLocation>
        <location evidence="1">Cytoplasm</location>
    </subcellularLocation>
</comment>
<comment type="similarity">
    <text evidence="1">Belongs to the MnmG family.</text>
</comment>
<name>MNMG_CHESB</name>
<accession>Q11CN3</accession>
<gene>
    <name evidence="1" type="primary">mnmG</name>
    <name evidence="1" type="synonym">gidA</name>
    <name type="ordered locus">Meso_3471</name>
</gene>
<proteinExistence type="inferred from homology"/>
<evidence type="ECO:0000255" key="1">
    <source>
        <dbReference type="HAMAP-Rule" id="MF_00129"/>
    </source>
</evidence>
<keyword id="KW-0963">Cytoplasm</keyword>
<keyword id="KW-0274">FAD</keyword>
<keyword id="KW-0285">Flavoprotein</keyword>
<keyword id="KW-0520">NAD</keyword>
<keyword id="KW-0819">tRNA processing</keyword>
<feature type="chain" id="PRO_0000345297" description="tRNA uridine 5-carboxymethylaminomethyl modification enzyme MnmG">
    <location>
        <begin position="1"/>
        <end position="622"/>
    </location>
</feature>
<feature type="binding site" evidence="1">
    <location>
        <begin position="11"/>
        <end position="16"/>
    </location>
    <ligand>
        <name>FAD</name>
        <dbReference type="ChEBI" id="CHEBI:57692"/>
    </ligand>
</feature>
<feature type="binding site" evidence="1">
    <location>
        <begin position="270"/>
        <end position="284"/>
    </location>
    <ligand>
        <name>NAD(+)</name>
        <dbReference type="ChEBI" id="CHEBI:57540"/>
    </ligand>
</feature>
<sequence>MIHKFDVVVVGGGHAGCEAAAAAARAGARTALVTMRRDTIGVMSCNPAIGGIGKGQLVREVDALDGLMGRVADAAGIQFRLLNRRKGPAVRGPRTQADRKLYRQAMQAVISEQENLQVIEAEVHTLGMEHGRITHVGLSGDSQINCAAVVLTTGTFLRGLIHIGQKKIPAGRVNEPAAKGLSASMEAAGFKLGRLKTGTPPRLDGRTIEWNMLGFQKADEDPVPFSLLSEKIQNPQITCGITRTTTDTHRIIQENLDKSAMYSGQIEGIGPRYCPSIEDKIVKFGERDGHQIFLEPEGLDDHTVYPNGLSTSLPEEVQHAFLKTIPGLANAHVLQPGYAIEYDHVDPRELEPSLETRRVRGLFLAGQINGTTGYEEAAAQGVIAGINAASVASGSTTVVPSRTDAYIGVMIDDLVTRGVTEPYRMFTSRAEFRLSLRADNADERLTPRAIEWGVASKVRRDRFYKAEQELSDARELTKARGLTPNEAARHGIAVNQDGVRRSAYDLLSFADINIERLKAIWPELGSIAPKTCERLETEARYAVYLDRQVADAERVRREEGRSIPDGIDFDSVPGLSNELKYKLRQRRPRTLAEAQRIDGMTPAALALILVAIRQGEKIRGAA</sequence>
<organism>
    <name type="scientific">Chelativorans sp. (strain BNC1)</name>
    <dbReference type="NCBI Taxonomy" id="266779"/>
    <lineage>
        <taxon>Bacteria</taxon>
        <taxon>Pseudomonadati</taxon>
        <taxon>Pseudomonadota</taxon>
        <taxon>Alphaproteobacteria</taxon>
        <taxon>Hyphomicrobiales</taxon>
        <taxon>Phyllobacteriaceae</taxon>
        <taxon>Chelativorans</taxon>
    </lineage>
</organism>